<proteinExistence type="inferred from homology"/>
<comment type="function">
    <text evidence="1">Catalyzes the hydrolysis of 10-formyltetrahydrofolate (formyl-FH4) to formate and tetrahydrofolate (FH4).</text>
</comment>
<comment type="catalytic activity">
    <reaction evidence="1">
        <text>(6R)-10-formyltetrahydrofolate + H2O = (6S)-5,6,7,8-tetrahydrofolate + formate + H(+)</text>
        <dbReference type="Rhea" id="RHEA:19833"/>
        <dbReference type="ChEBI" id="CHEBI:15377"/>
        <dbReference type="ChEBI" id="CHEBI:15378"/>
        <dbReference type="ChEBI" id="CHEBI:15740"/>
        <dbReference type="ChEBI" id="CHEBI:57453"/>
        <dbReference type="ChEBI" id="CHEBI:195366"/>
        <dbReference type="EC" id="3.5.1.10"/>
    </reaction>
</comment>
<comment type="pathway">
    <text evidence="1">Purine metabolism; IMP biosynthesis via de novo pathway; formate from 10-formyl-5,6,7,8-tetrahydrofolate: step 1/1.</text>
</comment>
<comment type="similarity">
    <text evidence="1">Belongs to the PurU family.</text>
</comment>
<reference key="1">
    <citation type="journal article" date="1995" name="DNA Res.">
        <title>Sequence analysis of the genome of the unicellular cyanobacterium Synechocystis sp. strain PCC6803. I. Sequence features in the 1 Mb region from map positions 64% to 92% of the genome.</title>
        <authorList>
            <person name="Kaneko T."/>
            <person name="Tanaka A."/>
            <person name="Sato S."/>
            <person name="Kotani H."/>
            <person name="Sazuka T."/>
            <person name="Miyajima N."/>
            <person name="Sugiura M."/>
            <person name="Tabata S."/>
        </authorList>
    </citation>
    <scope>NUCLEOTIDE SEQUENCE [LARGE SCALE GENOMIC DNA]</scope>
    <source>
        <strain>ATCC 27184 / PCC 6803 / N-1</strain>
    </source>
</reference>
<reference key="2">
    <citation type="journal article" date="1996" name="DNA Res.">
        <title>Sequence analysis of the genome of the unicellular cyanobacterium Synechocystis sp. strain PCC6803. II. Sequence determination of the entire genome and assignment of potential protein-coding regions.</title>
        <authorList>
            <person name="Kaneko T."/>
            <person name="Sato S."/>
            <person name="Kotani H."/>
            <person name="Tanaka A."/>
            <person name="Asamizu E."/>
            <person name="Nakamura Y."/>
            <person name="Miyajima N."/>
            <person name="Hirosawa M."/>
            <person name="Sugiura M."/>
            <person name="Sasamoto S."/>
            <person name="Kimura T."/>
            <person name="Hosouchi T."/>
            <person name="Matsuno A."/>
            <person name="Muraki A."/>
            <person name="Nakazaki N."/>
            <person name="Naruo K."/>
            <person name="Okumura S."/>
            <person name="Shimpo S."/>
            <person name="Takeuchi C."/>
            <person name="Wada T."/>
            <person name="Watanabe A."/>
            <person name="Yamada M."/>
            <person name="Yasuda M."/>
            <person name="Tabata S."/>
        </authorList>
    </citation>
    <scope>NUCLEOTIDE SEQUENCE [LARGE SCALE GENOMIC DNA]</scope>
    <source>
        <strain>ATCC 27184 / PCC 6803 / Kazusa</strain>
    </source>
</reference>
<protein>
    <recommendedName>
        <fullName evidence="1">Formyltetrahydrofolate deformylase</fullName>
        <ecNumber evidence="1">3.5.1.10</ecNumber>
    </recommendedName>
    <alternativeName>
        <fullName evidence="1">Formyl-FH(4) hydrolase</fullName>
    </alternativeName>
</protein>
<sequence length="284" mass="32634">MQNLTATLLVSCPDQPGIVAQIAQFIYQNQGNIIHADQHTDFSSGLFLNRVEWQLDNFRLSRPELLSAWSQLAEQLQATWQIHFSDQLPRLALWVSKQDHCLLDILWRWRSGELRCEIPLIISNHPDLKSIADQFGIDFHCLPITKENKLAQETAELALLKQYQIDLVVLAKYLQILTTDFVVQFPNIINIHHSFLPAFPGANPYHRAHERGVKIIGATAHYATAQLDEGPIIEQDVVRVSHRDNVDDLIRKGRDLERVVLARAVRLHLQHRILVYDNRTVVFA</sequence>
<keyword id="KW-0378">Hydrolase</keyword>
<keyword id="KW-0554">One-carbon metabolism</keyword>
<keyword id="KW-0658">Purine biosynthesis</keyword>
<keyword id="KW-1185">Reference proteome</keyword>
<evidence type="ECO:0000255" key="1">
    <source>
        <dbReference type="HAMAP-Rule" id="MF_01927"/>
    </source>
</evidence>
<feature type="chain" id="PRO_0000074967" description="Formyltetrahydrofolate deformylase">
    <location>
        <begin position="1"/>
        <end position="284"/>
    </location>
</feature>
<feature type="domain" description="ACT" evidence="1">
    <location>
        <begin position="7"/>
        <end position="90"/>
    </location>
</feature>
<feature type="active site" evidence="1">
    <location>
        <position position="228"/>
    </location>
</feature>
<accession>Q55135</accession>
<name>PURU_SYNY3</name>
<gene>
    <name evidence="1" type="primary">purU</name>
    <name type="ordered locus">sll0070</name>
</gene>
<organism>
    <name type="scientific">Synechocystis sp. (strain ATCC 27184 / PCC 6803 / Kazusa)</name>
    <dbReference type="NCBI Taxonomy" id="1111708"/>
    <lineage>
        <taxon>Bacteria</taxon>
        <taxon>Bacillati</taxon>
        <taxon>Cyanobacteriota</taxon>
        <taxon>Cyanophyceae</taxon>
        <taxon>Synechococcales</taxon>
        <taxon>Merismopediaceae</taxon>
        <taxon>Synechocystis</taxon>
    </lineage>
</organism>
<dbReference type="EC" id="3.5.1.10" evidence="1"/>
<dbReference type="EMBL" id="BA000022">
    <property type="protein sequence ID" value="BAA10270.1"/>
    <property type="molecule type" value="Genomic_DNA"/>
</dbReference>
<dbReference type="PIR" id="S74352">
    <property type="entry name" value="S74352"/>
</dbReference>
<dbReference type="SMR" id="Q55135"/>
<dbReference type="FunCoup" id="Q55135">
    <property type="interactions" value="306"/>
</dbReference>
<dbReference type="IntAct" id="Q55135">
    <property type="interactions" value="3"/>
</dbReference>
<dbReference type="STRING" id="1148.gene:10499769"/>
<dbReference type="PaxDb" id="1148-1001129"/>
<dbReference type="EnsemblBacteria" id="BAA10270">
    <property type="protein sequence ID" value="BAA10270"/>
    <property type="gene ID" value="BAA10270"/>
</dbReference>
<dbReference type="KEGG" id="syn:sll0070"/>
<dbReference type="eggNOG" id="COG0788">
    <property type="taxonomic scope" value="Bacteria"/>
</dbReference>
<dbReference type="InParanoid" id="Q55135"/>
<dbReference type="PhylomeDB" id="Q55135"/>
<dbReference type="UniPathway" id="UPA00074">
    <property type="reaction ID" value="UER00170"/>
</dbReference>
<dbReference type="Proteomes" id="UP000001425">
    <property type="component" value="Chromosome"/>
</dbReference>
<dbReference type="GO" id="GO:0008864">
    <property type="term" value="F:formyltetrahydrofolate deformylase activity"/>
    <property type="evidence" value="ECO:0007669"/>
    <property type="project" value="UniProtKB-UniRule"/>
</dbReference>
<dbReference type="GO" id="GO:0006189">
    <property type="term" value="P:'de novo' IMP biosynthetic process"/>
    <property type="evidence" value="ECO:0007669"/>
    <property type="project" value="UniProtKB-UniRule"/>
</dbReference>
<dbReference type="GO" id="GO:0006730">
    <property type="term" value="P:one-carbon metabolic process"/>
    <property type="evidence" value="ECO:0007669"/>
    <property type="project" value="UniProtKB-KW"/>
</dbReference>
<dbReference type="CDD" id="cd04875">
    <property type="entry name" value="ACT_F4HF-DF"/>
    <property type="match status" value="1"/>
</dbReference>
<dbReference type="CDD" id="cd08648">
    <property type="entry name" value="FMT_core_Formyl-FH4-Hydrolase_C"/>
    <property type="match status" value="1"/>
</dbReference>
<dbReference type="Gene3D" id="3.30.70.260">
    <property type="match status" value="1"/>
</dbReference>
<dbReference type="Gene3D" id="3.40.50.170">
    <property type="entry name" value="Formyl transferase, N-terminal domain"/>
    <property type="match status" value="1"/>
</dbReference>
<dbReference type="HAMAP" id="MF_01927">
    <property type="entry name" value="PurU"/>
    <property type="match status" value="1"/>
</dbReference>
<dbReference type="InterPro" id="IPR045865">
    <property type="entry name" value="ACT-like_dom_sf"/>
</dbReference>
<dbReference type="InterPro" id="IPR002912">
    <property type="entry name" value="ACT_dom"/>
</dbReference>
<dbReference type="InterPro" id="IPR041729">
    <property type="entry name" value="Formyl-FH4-Hydrolase_C"/>
</dbReference>
<dbReference type="InterPro" id="IPR002376">
    <property type="entry name" value="Formyl_transf_N"/>
</dbReference>
<dbReference type="InterPro" id="IPR036477">
    <property type="entry name" value="Formyl_transf_N_sf"/>
</dbReference>
<dbReference type="InterPro" id="IPR004810">
    <property type="entry name" value="PurU"/>
</dbReference>
<dbReference type="InterPro" id="IPR044074">
    <property type="entry name" value="PurU_ACT"/>
</dbReference>
<dbReference type="NCBIfam" id="NF004684">
    <property type="entry name" value="PRK06027.1"/>
    <property type="match status" value="1"/>
</dbReference>
<dbReference type="NCBIfam" id="TIGR00655">
    <property type="entry name" value="PurU"/>
    <property type="match status" value="1"/>
</dbReference>
<dbReference type="PANTHER" id="PTHR42706">
    <property type="entry name" value="FORMYLTETRAHYDROFOLATE DEFORMYLASE"/>
    <property type="match status" value="1"/>
</dbReference>
<dbReference type="PANTHER" id="PTHR42706:SF1">
    <property type="entry name" value="FORMYLTETRAHYDROFOLATE DEFORMYLASE 2, MITOCHONDRIAL"/>
    <property type="match status" value="1"/>
</dbReference>
<dbReference type="Pfam" id="PF01842">
    <property type="entry name" value="ACT"/>
    <property type="match status" value="1"/>
</dbReference>
<dbReference type="Pfam" id="PF00551">
    <property type="entry name" value="Formyl_trans_N"/>
    <property type="match status" value="1"/>
</dbReference>
<dbReference type="PIRSF" id="PIRSF036480">
    <property type="entry name" value="FormyFH4_hydr"/>
    <property type="match status" value="1"/>
</dbReference>
<dbReference type="PRINTS" id="PR01575">
    <property type="entry name" value="FFH4HYDRLASE"/>
</dbReference>
<dbReference type="SUPFAM" id="SSF55021">
    <property type="entry name" value="ACT-like"/>
    <property type="match status" value="1"/>
</dbReference>
<dbReference type="SUPFAM" id="SSF53328">
    <property type="entry name" value="Formyltransferase"/>
    <property type="match status" value="1"/>
</dbReference>
<dbReference type="PROSITE" id="PS51671">
    <property type="entry name" value="ACT"/>
    <property type="match status" value="1"/>
</dbReference>